<organism>
    <name type="scientific">Lachnoclostridium phytofermentans (strain ATCC 700394 / DSM 18823 / ISDg)</name>
    <name type="common">Clostridium phytofermentans</name>
    <dbReference type="NCBI Taxonomy" id="357809"/>
    <lineage>
        <taxon>Bacteria</taxon>
        <taxon>Bacillati</taxon>
        <taxon>Bacillota</taxon>
        <taxon>Clostridia</taxon>
        <taxon>Lachnospirales</taxon>
        <taxon>Lachnospiraceae</taxon>
    </lineage>
</organism>
<evidence type="ECO:0000250" key="1"/>
<evidence type="ECO:0000269" key="2">
    <source>
    </source>
</evidence>
<evidence type="ECO:0000305" key="3"/>
<evidence type="ECO:0000305" key="4">
    <source>
    </source>
</evidence>
<gene>
    <name type="ordered locus">Cphy_3396</name>
</gene>
<comment type="function">
    <text evidence="2">Alpha-galacturonidase able to catalyze the hydrolysis of the chromogenic substrate p-nitrophenyl-alpha-D-galacturonic acid (pNPalphaGalUA). It is probable that alpha-1,4-di-galacturonate (GalUA(2)) is the naturally occurring substrate.</text>
</comment>
<comment type="catalytic activity">
    <reaction evidence="2">
        <text>[(1-&gt;4)-alpha-D-galacturonosyl](n) + H2O = alpha-D-galacturonate + [(1-&gt;4)-alpha-D-galacturonosyl](n-1)</text>
        <dbReference type="Rhea" id="RHEA:14117"/>
        <dbReference type="Rhea" id="RHEA-COMP:14570"/>
        <dbReference type="Rhea" id="RHEA-COMP:14572"/>
        <dbReference type="ChEBI" id="CHEBI:15377"/>
        <dbReference type="ChEBI" id="CHEBI:58658"/>
        <dbReference type="ChEBI" id="CHEBI:140523"/>
        <dbReference type="EC" id="3.2.1.67"/>
    </reaction>
</comment>
<comment type="cofactor">
    <cofactor evidence="4">
        <name>NAD(+)</name>
        <dbReference type="ChEBI" id="CHEBI:57540"/>
    </cofactor>
</comment>
<comment type="cofactor">
    <cofactor evidence="4">
        <name>Mn(2+)</name>
        <dbReference type="ChEBI" id="CHEBI:29035"/>
    </cofactor>
    <text evidence="4">Binds 1 Mn(2+) ion per subunit.</text>
</comment>
<comment type="subunit">
    <text evidence="1">Homotetramer.</text>
</comment>
<comment type="similarity">
    <text evidence="3">Belongs to the glycosyl hydrolase 4 family.</text>
</comment>
<protein>
    <recommendedName>
        <fullName>Alpha-galacturonidase</fullName>
        <ecNumber>3.2.1.67</ecNumber>
    </recommendedName>
</protein>
<name>LPLD_LACP7</name>
<reference key="1">
    <citation type="submission" date="2007-11" db="EMBL/GenBank/DDBJ databases">
        <title>Complete genome sequence of Clostridium phytofermentans ISDg.</title>
        <authorList>
            <person name="Leschine S.B."/>
            <person name="Warnick T.A."/>
            <person name="Blanchard J.L."/>
            <person name="Schnell D.J."/>
            <person name="Petit E.L."/>
            <person name="LaTouf W.G."/>
            <person name="Copeland A."/>
            <person name="Lucas S."/>
            <person name="Lapidus A."/>
            <person name="Barry K."/>
            <person name="Glavina del Rio T."/>
            <person name="Dalin E."/>
            <person name="Tice H."/>
            <person name="Pitluck S."/>
            <person name="Kiss H."/>
            <person name="Brettin T."/>
            <person name="Bruce D."/>
            <person name="Detter J.C."/>
            <person name="Han C."/>
            <person name="Kuske C."/>
            <person name="Schmutz J."/>
            <person name="Larimer F."/>
            <person name="Land M."/>
            <person name="Hauser L."/>
            <person name="Kyrpides N."/>
            <person name="Kim E.A."/>
            <person name="Richardson P."/>
        </authorList>
    </citation>
    <scope>NUCLEOTIDE SEQUENCE [LARGE SCALE GENOMIC DNA]</scope>
    <source>
        <strain>ATCC 700394 / DSM 18823 / ISDg</strain>
    </source>
</reference>
<reference key="2">
    <citation type="journal article" date="2013" name="FEBS Lett.">
        <title>alpha-Galacturonidase(s): A new class of Family 4 glycoside hydrolases with strict specificity and a unique CHEV active site motif.</title>
        <authorList>
            <person name="Thompson J."/>
            <person name="Pikis A."/>
            <person name="Rich J."/>
            <person name="Hall B.G."/>
            <person name="Withers S.G."/>
        </authorList>
    </citation>
    <scope>FUNCTION</scope>
    <scope>CATALYTIC ACTIVITY</scope>
    <scope>COFACTOR</scope>
    <source>
        <strain>ATCC 700394 / DSM 18823 / ISDg</strain>
    </source>
</reference>
<keyword id="KW-0119">Carbohydrate metabolism</keyword>
<keyword id="KW-0326">Glycosidase</keyword>
<keyword id="KW-0378">Hydrolase</keyword>
<keyword id="KW-0464">Manganese</keyword>
<keyword id="KW-0479">Metal-binding</keyword>
<keyword id="KW-0520">NAD</keyword>
<keyword id="KW-1185">Reference proteome</keyword>
<feature type="chain" id="PRO_0000422162" description="Alpha-galacturonidase">
    <location>
        <begin position="1"/>
        <end position="466"/>
    </location>
</feature>
<feature type="active site" description="Proton donor" evidence="1">
    <location>
        <position position="180"/>
    </location>
</feature>
<feature type="binding site" evidence="1">
    <location>
        <begin position="11"/>
        <end position="78"/>
    </location>
    <ligand>
        <name>NAD(+)</name>
        <dbReference type="ChEBI" id="CHEBI:57540"/>
    </ligand>
</feature>
<feature type="binding site" evidence="1">
    <location>
        <position position="157"/>
    </location>
    <ligand>
        <name>substrate</name>
    </ligand>
</feature>
<feature type="binding site" evidence="1">
    <location>
        <position position="179"/>
    </location>
    <ligand>
        <name>Mn(2+)</name>
        <dbReference type="ChEBI" id="CHEBI:29035"/>
    </ligand>
</feature>
<feature type="binding site" evidence="1">
    <location>
        <position position="216"/>
    </location>
    <ligand>
        <name>Mn(2+)</name>
        <dbReference type="ChEBI" id="CHEBI:29035"/>
    </ligand>
</feature>
<proteinExistence type="evidence at protein level"/>
<accession>A9KTB9</accession>
<dbReference type="EC" id="3.2.1.67"/>
<dbReference type="EMBL" id="CP000885">
    <property type="protein sequence ID" value="ABX43749.1"/>
    <property type="molecule type" value="Genomic_DNA"/>
</dbReference>
<dbReference type="RefSeq" id="WP_012201398.1">
    <property type="nucleotide sequence ID" value="NC_010001.1"/>
</dbReference>
<dbReference type="SMR" id="A9KTB9"/>
<dbReference type="STRING" id="357809.Cphy_3396"/>
<dbReference type="CAZy" id="GH4">
    <property type="family name" value="Glycoside Hydrolase Family 4"/>
</dbReference>
<dbReference type="KEGG" id="cpy:Cphy_3396"/>
<dbReference type="eggNOG" id="COG1486">
    <property type="taxonomic scope" value="Bacteria"/>
</dbReference>
<dbReference type="HOGENOM" id="CLU_045951_1_1_9"/>
<dbReference type="OrthoDB" id="9808275at2"/>
<dbReference type="Proteomes" id="UP000000370">
    <property type="component" value="Chromosome"/>
</dbReference>
<dbReference type="GO" id="GO:0047911">
    <property type="term" value="F:galacturan 1,4-alpha-galacturonidase activity"/>
    <property type="evidence" value="ECO:0007669"/>
    <property type="project" value="UniProtKB-EC"/>
</dbReference>
<dbReference type="GO" id="GO:0046872">
    <property type="term" value="F:metal ion binding"/>
    <property type="evidence" value="ECO:0007669"/>
    <property type="project" value="UniProtKB-KW"/>
</dbReference>
<dbReference type="GO" id="GO:0016616">
    <property type="term" value="F:oxidoreductase activity, acting on the CH-OH group of donors, NAD or NADP as acceptor"/>
    <property type="evidence" value="ECO:0007669"/>
    <property type="project" value="InterPro"/>
</dbReference>
<dbReference type="GO" id="GO:0005975">
    <property type="term" value="P:carbohydrate metabolic process"/>
    <property type="evidence" value="ECO:0007669"/>
    <property type="project" value="InterPro"/>
</dbReference>
<dbReference type="Gene3D" id="3.90.1820.10">
    <property type="entry name" value="AglA-like glucosidase"/>
    <property type="match status" value="1"/>
</dbReference>
<dbReference type="InterPro" id="IPR053715">
    <property type="entry name" value="GH4_Enzyme_sf"/>
</dbReference>
<dbReference type="InterPro" id="IPR001088">
    <property type="entry name" value="Glyco_hydro_4"/>
</dbReference>
<dbReference type="InterPro" id="IPR022616">
    <property type="entry name" value="Glyco_hydro_4_C"/>
</dbReference>
<dbReference type="InterPro" id="IPR015955">
    <property type="entry name" value="Lactate_DH/Glyco_Ohase_4_C"/>
</dbReference>
<dbReference type="InterPro" id="IPR036291">
    <property type="entry name" value="NAD(P)-bd_dom_sf"/>
</dbReference>
<dbReference type="PANTHER" id="PTHR32092">
    <property type="entry name" value="6-PHOSPHO-BETA-GLUCOSIDASE-RELATED"/>
    <property type="match status" value="1"/>
</dbReference>
<dbReference type="PANTHER" id="PTHR32092:SF2">
    <property type="entry name" value="ALPHA-GALACTURONIDASE"/>
    <property type="match status" value="1"/>
</dbReference>
<dbReference type="Pfam" id="PF02056">
    <property type="entry name" value="Glyco_hydro_4"/>
    <property type="match status" value="1"/>
</dbReference>
<dbReference type="Pfam" id="PF11975">
    <property type="entry name" value="Glyco_hydro_4C"/>
    <property type="match status" value="1"/>
</dbReference>
<dbReference type="PRINTS" id="PR00732">
    <property type="entry name" value="GLHYDRLASE4"/>
</dbReference>
<dbReference type="SUPFAM" id="SSF56327">
    <property type="entry name" value="LDH C-terminal domain-like"/>
    <property type="match status" value="1"/>
</dbReference>
<dbReference type="SUPFAM" id="SSF51735">
    <property type="entry name" value="NAD(P)-binding Rossmann-fold domains"/>
    <property type="match status" value="1"/>
</dbReference>
<sequence>MKYNNGKVSDVKIAYIGGGSRGWAWTFMTDLAMEPNMSGKISLYDIDQEAAKNNEIIGNMITRRDDTVGKWNYETANTMEAALTGADFVVISILPGTFDEMEADVHMPERLGIYQSVGDTAGPGGMMRALRTIPMFVTIANAIKEYSPKAWVINYTNPMSMCVKTLYHVFPEIKAFGCCHEVFGTQKVLKGIAEQELKIDRIDRNDIHVNVLGINHFTWFNYASYQGIDLFPIYCKYIEDHFEEGFEEKDENWANASFACKHRVKFDLFNEFGLIAAAGDRHLTEFMPSERYLKDKETVADWNFGLTTVEWRKKDLEDRLNKSHRLVSGEEEIKLEPSGEEGILLIKALCGLTRVISNVNIPNTNLQIENLPSTAIVETNAVFERDSIRPIMAGEMPENVVKLTMPHILNHEYIMEAALTFDKSLVVKAFEQDPLVKDMATKEEVEKLVEDMLDATKAYLPKEWNL</sequence>